<keyword id="KW-1003">Cell membrane</keyword>
<keyword id="KW-0143">Chaperone</keyword>
<keyword id="KW-0449">Lipoprotein</keyword>
<keyword id="KW-0472">Membrane</keyword>
<keyword id="KW-0564">Palmitate</keyword>
<keyword id="KW-0653">Protein transport</keyword>
<keyword id="KW-1185">Reference proteome</keyword>
<keyword id="KW-0732">Signal</keyword>
<keyword id="KW-0812">Transmembrane</keyword>
<keyword id="KW-1133">Transmembrane helix</keyword>
<keyword id="KW-0813">Transport</keyword>
<gene>
    <name evidence="1" type="primary">yidC2</name>
    <name type="ordered locus">SERP1697</name>
</gene>
<name>YIDC2_STAEQ</name>
<comment type="function">
    <text evidence="1">Required for the insertion and/or proper folding and/or complex formation of integral membrane proteins into the membrane. Involved in integration of membrane proteins that insert both dependently and independently of the Sec translocase complex, as well as at least some lipoproteins.</text>
</comment>
<comment type="subcellular location">
    <subcellularLocation>
        <location evidence="1">Cell membrane</location>
        <topology evidence="1">Multi-pass membrane protein</topology>
    </subcellularLocation>
</comment>
<comment type="similarity">
    <text evidence="1">Belongs to the OXA1/ALB3/YidC family. Type 2 subfamily.</text>
</comment>
<evidence type="ECO:0000255" key="1">
    <source>
        <dbReference type="HAMAP-Rule" id="MF_01811"/>
    </source>
</evidence>
<evidence type="ECO:0000256" key="2">
    <source>
        <dbReference type="SAM" id="MobiDB-lite"/>
    </source>
</evidence>
<organism>
    <name type="scientific">Staphylococcus epidermidis (strain ATCC 35984 / DSM 28319 / BCRC 17069 / CCUG 31568 / BM 3577 / RP62A)</name>
    <dbReference type="NCBI Taxonomy" id="176279"/>
    <lineage>
        <taxon>Bacteria</taxon>
        <taxon>Bacillati</taxon>
        <taxon>Bacillota</taxon>
        <taxon>Bacilli</taxon>
        <taxon>Bacillales</taxon>
        <taxon>Staphylococcaceae</taxon>
        <taxon>Staphylococcus</taxon>
    </lineage>
</organism>
<proteinExistence type="inferred from homology"/>
<reference key="1">
    <citation type="journal article" date="2005" name="J. Bacteriol.">
        <title>Insights on evolution of virulence and resistance from the complete genome analysis of an early methicillin-resistant Staphylococcus aureus strain and a biofilm-producing methicillin-resistant Staphylococcus epidermidis strain.</title>
        <authorList>
            <person name="Gill S.R."/>
            <person name="Fouts D.E."/>
            <person name="Archer G.L."/>
            <person name="Mongodin E.F."/>
            <person name="DeBoy R.T."/>
            <person name="Ravel J."/>
            <person name="Paulsen I.T."/>
            <person name="Kolonay J.F."/>
            <person name="Brinkac L.M."/>
            <person name="Beanan M.J."/>
            <person name="Dodson R.J."/>
            <person name="Daugherty S.C."/>
            <person name="Madupu R."/>
            <person name="Angiuoli S.V."/>
            <person name="Durkin A.S."/>
            <person name="Haft D.H."/>
            <person name="Vamathevan J.J."/>
            <person name="Khouri H."/>
            <person name="Utterback T.R."/>
            <person name="Lee C."/>
            <person name="Dimitrov G."/>
            <person name="Jiang L."/>
            <person name="Qin H."/>
            <person name="Weidman J."/>
            <person name="Tran K."/>
            <person name="Kang K.H."/>
            <person name="Hance I.R."/>
            <person name="Nelson K.E."/>
            <person name="Fraser C.M."/>
        </authorList>
    </citation>
    <scope>NUCLEOTIDE SEQUENCE [LARGE SCALE GENOMIC DNA]</scope>
    <source>
        <strain>ATCC 35984 / DSM 28319 / BCRC 17069 / CCUG 31568 / BM 3577 / RP62A</strain>
    </source>
</reference>
<protein>
    <recommendedName>
        <fullName evidence="1">Membrane protein insertase YidC 2</fullName>
    </recommendedName>
    <alternativeName>
        <fullName evidence="1">Foldase YidC 2</fullName>
    </alternativeName>
    <alternativeName>
        <fullName evidence="1">Membrane integrase YidC 2</fullName>
    </alternativeName>
    <alternativeName>
        <fullName evidence="1">Membrane protein YidC 2</fullName>
    </alternativeName>
</protein>
<dbReference type="EMBL" id="CP000029">
    <property type="protein sequence ID" value="AAW55067.1"/>
    <property type="molecule type" value="Genomic_DNA"/>
</dbReference>
<dbReference type="SMR" id="Q5HMD1"/>
<dbReference type="STRING" id="176279.SERP1697"/>
<dbReference type="KEGG" id="ser:SERP1697"/>
<dbReference type="eggNOG" id="COG0706">
    <property type="taxonomic scope" value="Bacteria"/>
</dbReference>
<dbReference type="HOGENOM" id="CLU_036138_5_2_9"/>
<dbReference type="Proteomes" id="UP000000531">
    <property type="component" value="Chromosome"/>
</dbReference>
<dbReference type="GO" id="GO:0005886">
    <property type="term" value="C:plasma membrane"/>
    <property type="evidence" value="ECO:0007669"/>
    <property type="project" value="UniProtKB-SubCell"/>
</dbReference>
<dbReference type="GO" id="GO:0032977">
    <property type="term" value="F:membrane insertase activity"/>
    <property type="evidence" value="ECO:0007669"/>
    <property type="project" value="InterPro"/>
</dbReference>
<dbReference type="GO" id="GO:0051205">
    <property type="term" value="P:protein insertion into membrane"/>
    <property type="evidence" value="ECO:0007669"/>
    <property type="project" value="TreeGrafter"/>
</dbReference>
<dbReference type="GO" id="GO:0015031">
    <property type="term" value="P:protein transport"/>
    <property type="evidence" value="ECO:0007669"/>
    <property type="project" value="UniProtKB-KW"/>
</dbReference>
<dbReference type="CDD" id="cd20070">
    <property type="entry name" value="5TM_YidC_Alb3"/>
    <property type="match status" value="1"/>
</dbReference>
<dbReference type="HAMAP" id="MF_01811">
    <property type="entry name" value="YidC_type2"/>
    <property type="match status" value="1"/>
</dbReference>
<dbReference type="InterPro" id="IPR001708">
    <property type="entry name" value="YidC/ALB3/OXA1/COX18"/>
</dbReference>
<dbReference type="InterPro" id="IPR028055">
    <property type="entry name" value="YidC/Oxa/ALB_C"/>
</dbReference>
<dbReference type="InterPro" id="IPR023060">
    <property type="entry name" value="YidC/YidC1/YidC2_Firmicutes"/>
</dbReference>
<dbReference type="InterPro" id="IPR047196">
    <property type="entry name" value="YidC_ALB_C"/>
</dbReference>
<dbReference type="NCBIfam" id="TIGR03592">
    <property type="entry name" value="yidC_oxa1_cterm"/>
    <property type="match status" value="1"/>
</dbReference>
<dbReference type="PANTHER" id="PTHR12428:SF65">
    <property type="entry name" value="CYTOCHROME C OXIDASE ASSEMBLY PROTEIN COX18, MITOCHONDRIAL"/>
    <property type="match status" value="1"/>
</dbReference>
<dbReference type="PANTHER" id="PTHR12428">
    <property type="entry name" value="OXA1"/>
    <property type="match status" value="1"/>
</dbReference>
<dbReference type="Pfam" id="PF02096">
    <property type="entry name" value="60KD_IMP"/>
    <property type="match status" value="1"/>
</dbReference>
<dbReference type="PRINTS" id="PR00701">
    <property type="entry name" value="60KDINNERMP"/>
</dbReference>
<dbReference type="PROSITE" id="PS51257">
    <property type="entry name" value="PROKAR_LIPOPROTEIN"/>
    <property type="match status" value="1"/>
</dbReference>
<sequence length="290" mass="33671">MKKKALLPLFLGIMIFLAGCDYSTPEKQDGFFFNTFVQPMKHLLQWLGNDVFHNNFGLAIIVLVLFIRLILLPFMLSNYKNSHMMREKMKVAKPEVDGIQEKVKRARTQEEKMAANQELMEVYKKYDMNPMKSMLGCLPILIQMPIIMGLYFVLKDKLVNGLSEHPHFLWFNLTKPDIWITVIAGVLYFIQAVVSSKTMPQEQRQMGYMMMVISPIMIIWISLQASSALGLYWSVSALFLVIQTHFANIYYSKLAKKEVQPFIEKYEREHNPSSKKKGKNTQVVSKKNKK</sequence>
<accession>Q5HMD1</accession>
<feature type="signal peptide" evidence="1">
    <location>
        <begin position="1"/>
        <end position="19"/>
    </location>
</feature>
<feature type="chain" id="PRO_0000042936" description="Membrane protein insertase YidC 2">
    <location>
        <begin position="20"/>
        <end position="290"/>
    </location>
</feature>
<feature type="transmembrane region" description="Helical" evidence="1">
    <location>
        <begin position="56"/>
        <end position="76"/>
    </location>
</feature>
<feature type="transmembrane region" description="Helical" evidence="1">
    <location>
        <begin position="134"/>
        <end position="154"/>
    </location>
</feature>
<feature type="transmembrane region" description="Helical" evidence="1">
    <location>
        <begin position="176"/>
        <end position="196"/>
    </location>
</feature>
<feature type="transmembrane region" description="Helical" evidence="1">
    <location>
        <begin position="211"/>
        <end position="231"/>
    </location>
</feature>
<feature type="transmembrane region" description="Helical" evidence="1">
    <location>
        <begin position="232"/>
        <end position="252"/>
    </location>
</feature>
<feature type="region of interest" description="Disordered" evidence="2">
    <location>
        <begin position="266"/>
        <end position="290"/>
    </location>
</feature>
<feature type="compositionally biased region" description="Polar residues" evidence="2">
    <location>
        <begin position="280"/>
        <end position="290"/>
    </location>
</feature>
<feature type="lipid moiety-binding region" description="N-palmitoyl cysteine" evidence="1">
    <location>
        <position position="20"/>
    </location>
</feature>
<feature type="lipid moiety-binding region" description="S-diacylglycerol cysteine" evidence="1">
    <location>
        <position position="20"/>
    </location>
</feature>